<gene>
    <name type="primary">SLC1A6</name>
    <name type="synonym">EAAT4</name>
</gene>
<dbReference type="EMBL" id="AF167077">
    <property type="protein sequence ID" value="AAF14543.2"/>
    <property type="molecule type" value="mRNA"/>
</dbReference>
<dbReference type="RefSeq" id="NP_001003137.1">
    <property type="nucleotide sequence ID" value="NM_001003137.1"/>
</dbReference>
<dbReference type="SMR" id="Q9N1R2"/>
<dbReference type="FunCoup" id="Q9N1R2">
    <property type="interactions" value="94"/>
</dbReference>
<dbReference type="STRING" id="9615.ENSCAFP00000023841"/>
<dbReference type="GlyCosmos" id="Q9N1R2">
    <property type="glycosylation" value="3 sites, No reported glycans"/>
</dbReference>
<dbReference type="PaxDb" id="9612-ENSCAFP00000023841"/>
<dbReference type="eggNOG" id="KOG3787">
    <property type="taxonomic scope" value="Eukaryota"/>
</dbReference>
<dbReference type="InParanoid" id="Q9N1R2"/>
<dbReference type="OrthoDB" id="5877963at2759"/>
<dbReference type="Proteomes" id="UP000002254">
    <property type="component" value="Unplaced"/>
</dbReference>
<dbReference type="Proteomes" id="UP000694429">
    <property type="component" value="Unplaced"/>
</dbReference>
<dbReference type="Proteomes" id="UP000694542">
    <property type="component" value="Unplaced"/>
</dbReference>
<dbReference type="Proteomes" id="UP000805418">
    <property type="component" value="Unplaced"/>
</dbReference>
<dbReference type="GO" id="GO:0005886">
    <property type="term" value="C:plasma membrane"/>
    <property type="evidence" value="ECO:0000250"/>
    <property type="project" value="UniProtKB"/>
</dbReference>
<dbReference type="GO" id="GO:0015501">
    <property type="term" value="F:glutamate:sodium symporter activity"/>
    <property type="evidence" value="ECO:0000250"/>
    <property type="project" value="UniProtKB"/>
</dbReference>
<dbReference type="GO" id="GO:0005314">
    <property type="term" value="F:high-affinity L-glutamate transmembrane transporter activity"/>
    <property type="evidence" value="ECO:0000250"/>
    <property type="project" value="UniProtKB"/>
</dbReference>
<dbReference type="GO" id="GO:0015183">
    <property type="term" value="F:L-aspartate transmembrane transporter activity"/>
    <property type="evidence" value="ECO:0000250"/>
    <property type="project" value="UniProtKB"/>
</dbReference>
<dbReference type="GO" id="GO:0005313">
    <property type="term" value="F:L-glutamate transmembrane transporter activity"/>
    <property type="evidence" value="ECO:0000250"/>
    <property type="project" value="UniProtKB"/>
</dbReference>
<dbReference type="GO" id="GO:0046872">
    <property type="term" value="F:metal ion binding"/>
    <property type="evidence" value="ECO:0007669"/>
    <property type="project" value="UniProtKB-KW"/>
</dbReference>
<dbReference type="GO" id="GO:0015175">
    <property type="term" value="F:neutral L-amino acid transmembrane transporter activity"/>
    <property type="evidence" value="ECO:0000318"/>
    <property type="project" value="GO_Central"/>
</dbReference>
<dbReference type="GO" id="GO:0140009">
    <property type="term" value="P:L-aspartate import across plasma membrane"/>
    <property type="evidence" value="ECO:0000250"/>
    <property type="project" value="UniProtKB"/>
</dbReference>
<dbReference type="GO" id="GO:0098712">
    <property type="term" value="P:L-glutamate import across plasma membrane"/>
    <property type="evidence" value="ECO:0000250"/>
    <property type="project" value="UniProtKB"/>
</dbReference>
<dbReference type="GO" id="GO:0015813">
    <property type="term" value="P:L-glutamate transmembrane transport"/>
    <property type="evidence" value="ECO:0000318"/>
    <property type="project" value="GO_Central"/>
</dbReference>
<dbReference type="FunFam" id="1.10.3860.10:FF:000002">
    <property type="entry name" value="Amino acid transporter"/>
    <property type="match status" value="1"/>
</dbReference>
<dbReference type="Gene3D" id="1.10.3860.10">
    <property type="entry name" value="Sodium:dicarboxylate symporter"/>
    <property type="match status" value="1"/>
</dbReference>
<dbReference type="InterPro" id="IPR050746">
    <property type="entry name" value="DAACS"/>
</dbReference>
<dbReference type="InterPro" id="IPR001991">
    <property type="entry name" value="Na-dicarboxylate_symporter"/>
</dbReference>
<dbReference type="InterPro" id="IPR018107">
    <property type="entry name" value="Na-dicarboxylate_symporter_CS"/>
</dbReference>
<dbReference type="InterPro" id="IPR036458">
    <property type="entry name" value="Na:dicarbo_symporter_sf"/>
</dbReference>
<dbReference type="PANTHER" id="PTHR11958:SF67">
    <property type="entry name" value="EXCITATORY AMINO ACID TRANSPORTER 4"/>
    <property type="match status" value="1"/>
</dbReference>
<dbReference type="PANTHER" id="PTHR11958">
    <property type="entry name" value="SODIUM/DICARBOXYLATE SYMPORTER-RELATED"/>
    <property type="match status" value="1"/>
</dbReference>
<dbReference type="Pfam" id="PF00375">
    <property type="entry name" value="SDF"/>
    <property type="match status" value="1"/>
</dbReference>
<dbReference type="PRINTS" id="PR00173">
    <property type="entry name" value="EDTRNSPORT"/>
</dbReference>
<dbReference type="SUPFAM" id="SSF118215">
    <property type="entry name" value="Proton glutamate symport protein"/>
    <property type="match status" value="1"/>
</dbReference>
<dbReference type="PROSITE" id="PS00713">
    <property type="entry name" value="NA_DICARBOXYL_SYMP_1"/>
    <property type="match status" value="1"/>
</dbReference>
<dbReference type="PROSITE" id="PS00714">
    <property type="entry name" value="NA_DICARBOXYL_SYMP_2"/>
    <property type="match status" value="1"/>
</dbReference>
<evidence type="ECO:0000250" key="1">
    <source>
        <dbReference type="UniProtKB" id="O35921"/>
    </source>
</evidence>
<evidence type="ECO:0000250" key="2">
    <source>
        <dbReference type="UniProtKB" id="O59010"/>
    </source>
</evidence>
<evidence type="ECO:0000250" key="3">
    <source>
        <dbReference type="UniProtKB" id="P43003"/>
    </source>
</evidence>
<evidence type="ECO:0000250" key="4">
    <source>
        <dbReference type="UniProtKB" id="P48664"/>
    </source>
</evidence>
<evidence type="ECO:0000255" key="5"/>
<evidence type="ECO:0000269" key="6">
    <source>
    </source>
</evidence>
<evidence type="ECO:0000305" key="7"/>
<comment type="function">
    <text evidence="1">Sodium-dependent, high-affinity amino acid transporter that mediates the uptake of L-glutamate and also L-aspartate and D-aspartate. Functions as a symporter that transports one amino acid molecule together with two or three Na(+) ions and one proton, in parallel with the counter-transport of one K(+) ion. Mediates Cl(-) flux that is not coupled to amino acid transport; this avoids the accumulation of negative charges due to aspartate and Na(+) symport. Plays a redundant role in the rapid removal of released glutamate from the synaptic cleft, which is essential for terminating the postsynaptic action of glutamate.</text>
</comment>
<comment type="catalytic activity">
    <reaction evidence="4">
        <text>K(+)(in) + L-glutamate(out) + 3 Na(+)(out) + H(+)(out) = K(+)(out) + L-glutamate(in) + 3 Na(+)(in) + H(+)(in)</text>
        <dbReference type="Rhea" id="RHEA:70699"/>
        <dbReference type="ChEBI" id="CHEBI:15378"/>
        <dbReference type="ChEBI" id="CHEBI:29101"/>
        <dbReference type="ChEBI" id="CHEBI:29103"/>
        <dbReference type="ChEBI" id="CHEBI:29985"/>
    </reaction>
</comment>
<comment type="catalytic activity">
    <reaction evidence="4">
        <text>K(+)(in) + L-aspartate(out) + 3 Na(+)(out) + H(+)(out) = K(+)(out) + L-aspartate(in) + 3 Na(+)(in) + H(+)(in)</text>
        <dbReference type="Rhea" id="RHEA:70851"/>
        <dbReference type="ChEBI" id="CHEBI:15378"/>
        <dbReference type="ChEBI" id="CHEBI:29101"/>
        <dbReference type="ChEBI" id="CHEBI:29103"/>
        <dbReference type="ChEBI" id="CHEBI:29991"/>
    </reaction>
</comment>
<comment type="catalytic activity">
    <reaction evidence="4">
        <text>D-aspartate(out) + K(+)(in) + 3 Na(+)(out) + H(+)(out) = D-aspartate(in) + K(+)(out) + 3 Na(+)(in) + H(+)(in)</text>
        <dbReference type="Rhea" id="RHEA:71379"/>
        <dbReference type="ChEBI" id="CHEBI:15378"/>
        <dbReference type="ChEBI" id="CHEBI:29101"/>
        <dbReference type="ChEBI" id="CHEBI:29103"/>
        <dbReference type="ChEBI" id="CHEBI:29990"/>
    </reaction>
</comment>
<comment type="subunit">
    <text evidence="7">Homotrimer.</text>
</comment>
<comment type="subcellular location">
    <subcellularLocation>
        <location evidence="1">Cell membrane</location>
        <topology evidence="1">Multi-pass membrane protein</topology>
    </subcellularLocation>
</comment>
<comment type="tissue specificity">
    <text evidence="6">Detected in brain, cerebellum and hippocampus.</text>
</comment>
<comment type="domain">
    <text evidence="3">Contains eight transmembrane regions plus two helical hairpins that dip into the membrane. These helical hairpin structures play an important role in the transport process. The first enters the membrane from the cytoplasmic side, the second one from the extracellular side. During the transport cycle, the regions involved in amino acid transport, and especially the helical hairpins, move vertically by about 15-18 Angstroms, alternating between exposure to the aqueous phase and reinsertion in the lipid bilayer. In contrast, the regions involved in trimerization do not move.</text>
</comment>
<comment type="similarity">
    <text evidence="7">Belongs to the dicarboxylate/amino acid:cation symporter (DAACS) (TC 2.A.23) family. SLC1A6 subfamily.</text>
</comment>
<organism>
    <name type="scientific">Canis lupus familiaris</name>
    <name type="common">Dog</name>
    <name type="synonym">Canis familiaris</name>
    <dbReference type="NCBI Taxonomy" id="9615"/>
    <lineage>
        <taxon>Eukaryota</taxon>
        <taxon>Metazoa</taxon>
        <taxon>Chordata</taxon>
        <taxon>Craniata</taxon>
        <taxon>Vertebrata</taxon>
        <taxon>Euteleostomi</taxon>
        <taxon>Mammalia</taxon>
        <taxon>Eutheria</taxon>
        <taxon>Laurasiatheria</taxon>
        <taxon>Carnivora</taxon>
        <taxon>Caniformia</taxon>
        <taxon>Canidae</taxon>
        <taxon>Canis</taxon>
    </lineage>
</organism>
<sequence>MSSHGNSLFLRESGQRLGRVGWLQRLQESLQQRALRTRLRLQTMTREHVLRFLRRNAFILLTVSAVVIGVSLAFALRPYQLTYRQIKYFSFPGELLMRMLQMLVLPLIVSSLVTGMASLDNKATGRMGMRAAVYYMVTTVIAVFIGILMVTIIHPGKGSKEGLHREGRIETIPTADAFMDLVRNMFPPNLVEACFKQFKTQYSTRLVTRTIVRTENGSELGTSMPPPSSMDNGTSLLENVTWALGTLQEVLSFEETVPVPGSANGINALGLVVFSVAFGLVIGGVKHKGRVLRDFFDSLNEAIMRMVGIIIWYAPVGILFLIAGKILEMEDMAVLGGQLGMYTLTVIVGLFLHAGGVLPLIYFLITHRNPFPFIGGVLQALITAMGTSSSSATLPITFRCLEEGLGVDRRITRFVLPVGATVNMDGTALYEALAAIFIAQVNNYELNLGQITTISITATAASVGAAGIPQAGLVTMVIVLTSVGLPTEDITLIIAVDWFLDRLRTMTNVLGDSIGAAVIEHLSQRELELQEAELTLPSLGKPYKPLMAQEKGASRGRGGNESAM</sequence>
<feature type="chain" id="PRO_0000202069" description="Excitatory amino acid transporter 4">
    <location>
        <begin position="1"/>
        <end position="564"/>
    </location>
</feature>
<feature type="topological domain" description="Cytoplasmic" evidence="5">
    <location>
        <begin position="1"/>
        <end position="55"/>
    </location>
</feature>
<feature type="transmembrane region" description="Helical" evidence="5">
    <location>
        <begin position="56"/>
        <end position="76"/>
    </location>
</feature>
<feature type="transmembrane region" description="Helical" evidence="5">
    <location>
        <begin position="99"/>
        <end position="119"/>
    </location>
</feature>
<feature type="transmembrane region" description="Helical" evidence="5">
    <location>
        <begin position="133"/>
        <end position="153"/>
    </location>
</feature>
<feature type="transmembrane region" description="Helical; Name=4" evidence="3">
    <location>
        <begin position="262"/>
        <end position="285"/>
    </location>
</feature>
<feature type="transmembrane region" description="Helical; Name=5" evidence="3">
    <location>
        <begin position="295"/>
        <end position="322"/>
    </location>
</feature>
<feature type="transmembrane region" description="Helical; Name=6" evidence="3">
    <location>
        <begin position="344"/>
        <end position="365"/>
    </location>
</feature>
<feature type="intramembrane region" description="Discontinuously helical" evidence="3">
    <location>
        <begin position="371"/>
        <end position="401"/>
    </location>
</feature>
<feature type="transmembrane region" description="Helical; Name=7" evidence="3">
    <location>
        <begin position="411"/>
        <end position="437"/>
    </location>
</feature>
<feature type="intramembrane region" description="Discontinuously helical" evidence="3">
    <location>
        <begin position="451"/>
        <end position="484"/>
    </location>
</feature>
<feature type="transmembrane region" description="Helical; Name=8" evidence="3">
    <location>
        <begin position="498"/>
        <end position="519"/>
    </location>
</feature>
<feature type="binding site" evidence="3">
    <location>
        <begin position="388"/>
        <end position="390"/>
    </location>
    <ligand>
        <name>L-aspartate</name>
        <dbReference type="ChEBI" id="CHEBI:29991"/>
    </ligand>
</feature>
<feature type="binding site" evidence="2">
    <location>
        <position position="419"/>
    </location>
    <ligand>
        <name>Na(+)</name>
        <dbReference type="ChEBI" id="CHEBI:29101"/>
        <label>1</label>
    </ligand>
</feature>
<feature type="binding site" evidence="3">
    <location>
        <position position="421"/>
    </location>
    <ligand>
        <name>Na(+)</name>
        <dbReference type="ChEBI" id="CHEBI:29101"/>
        <label>2</label>
    </ligand>
</feature>
<feature type="binding site" evidence="2">
    <location>
        <position position="423"/>
    </location>
    <ligand>
        <name>Na(+)</name>
        <dbReference type="ChEBI" id="CHEBI:29101"/>
        <label>1</label>
    </ligand>
</feature>
<feature type="binding site" evidence="3">
    <location>
        <position position="427"/>
    </location>
    <ligand>
        <name>L-aspartate</name>
        <dbReference type="ChEBI" id="CHEBI:29991"/>
    </ligand>
</feature>
<feature type="binding site" evidence="3">
    <location>
        <begin position="468"/>
        <end position="472"/>
    </location>
    <ligand>
        <name>L-aspartate</name>
        <dbReference type="ChEBI" id="CHEBI:29991"/>
    </ligand>
</feature>
<feature type="binding site" evidence="3">
    <location>
        <position position="501"/>
    </location>
    <ligand>
        <name>L-aspartate</name>
        <dbReference type="ChEBI" id="CHEBI:29991"/>
    </ligand>
</feature>
<feature type="binding site" evidence="3">
    <location>
        <position position="508"/>
    </location>
    <ligand>
        <name>L-aspartate</name>
        <dbReference type="ChEBI" id="CHEBI:29991"/>
    </ligand>
</feature>
<feature type="binding site" evidence="2">
    <location>
        <position position="508"/>
    </location>
    <ligand>
        <name>Na(+)</name>
        <dbReference type="ChEBI" id="CHEBI:29101"/>
        <label>1</label>
    </ligand>
</feature>
<feature type="binding site" evidence="2">
    <location>
        <position position="512"/>
    </location>
    <ligand>
        <name>Na(+)</name>
        <dbReference type="ChEBI" id="CHEBI:29101"/>
        <label>1</label>
    </ligand>
</feature>
<feature type="modified residue" description="Phosphoserine" evidence="1">
    <location>
        <position position="2"/>
    </location>
</feature>
<feature type="glycosylation site" description="N-linked (GlcNAc...) asparagine" evidence="5">
    <location>
        <position position="216"/>
    </location>
</feature>
<feature type="glycosylation site" description="N-linked (GlcNAc...) asparagine" evidence="5">
    <location>
        <position position="232"/>
    </location>
</feature>
<feature type="glycosylation site" description="N-linked (GlcNAc...) asparagine" evidence="5">
    <location>
        <position position="239"/>
    </location>
</feature>
<keyword id="KW-0029">Amino-acid transport</keyword>
<keyword id="KW-1003">Cell membrane</keyword>
<keyword id="KW-0868">Chloride</keyword>
<keyword id="KW-0325">Glycoprotein</keyword>
<keyword id="KW-0472">Membrane</keyword>
<keyword id="KW-0479">Metal-binding</keyword>
<keyword id="KW-0597">Phosphoprotein</keyword>
<keyword id="KW-0630">Potassium</keyword>
<keyword id="KW-1185">Reference proteome</keyword>
<keyword id="KW-0915">Sodium</keyword>
<keyword id="KW-0769">Symport</keyword>
<keyword id="KW-0812">Transmembrane</keyword>
<keyword id="KW-1133">Transmembrane helix</keyword>
<keyword id="KW-0813">Transport</keyword>
<protein>
    <recommendedName>
        <fullName>Excitatory amino acid transporter 4</fullName>
    </recommendedName>
    <alternativeName>
        <fullName>Sodium-dependent glutamate/aspartate transporter</fullName>
    </alternativeName>
    <alternativeName>
        <fullName>Solute carrier family 1 member 6</fullName>
    </alternativeName>
</protein>
<name>EAA4_CANLF</name>
<reference key="1">
    <citation type="journal article" date="2000" name="J. Biol. Chem.">
        <title>Inherited defects of sodium-dependent glutamate transport mediated by glutamate/aspartate transporter in canine red cells due to a decreased level of transporter protein expression.</title>
        <authorList>
            <person name="Sato K."/>
            <person name="Inaba M."/>
            <person name="Suwa Y."/>
            <person name="Matsuu A."/>
            <person name="Hikasa Y."/>
            <person name="Ono K."/>
            <person name="Kagota K."/>
        </authorList>
    </citation>
    <scope>NUCLEOTIDE SEQUENCE [MRNA]</scope>
    <scope>TISSUE SPECIFICITY</scope>
    <source>
        <tissue>Brain</tissue>
    </source>
</reference>
<proteinExistence type="evidence at transcript level"/>
<accession>Q9N1R2</accession>